<evidence type="ECO:0000255" key="1">
    <source>
        <dbReference type="HAMAP-Rule" id="MF_00564"/>
    </source>
</evidence>
<evidence type="ECO:0000305" key="2"/>
<gene>
    <name evidence="1" type="primary">rph</name>
    <name type="ordered locus">ACIAD0050</name>
</gene>
<accession>Q6FFX5</accession>
<feature type="chain" id="PRO_0000139858" description="Ribonuclease PH">
    <location>
        <begin position="1"/>
        <end position="238"/>
    </location>
</feature>
<feature type="binding site" evidence="1">
    <location>
        <position position="86"/>
    </location>
    <ligand>
        <name>phosphate</name>
        <dbReference type="ChEBI" id="CHEBI:43474"/>
        <note>substrate</note>
    </ligand>
</feature>
<feature type="binding site" evidence="1">
    <location>
        <begin position="124"/>
        <end position="126"/>
    </location>
    <ligand>
        <name>phosphate</name>
        <dbReference type="ChEBI" id="CHEBI:43474"/>
        <note>substrate</note>
    </ligand>
</feature>
<organism>
    <name type="scientific">Acinetobacter baylyi (strain ATCC 33305 / BD413 / ADP1)</name>
    <dbReference type="NCBI Taxonomy" id="62977"/>
    <lineage>
        <taxon>Bacteria</taxon>
        <taxon>Pseudomonadati</taxon>
        <taxon>Pseudomonadota</taxon>
        <taxon>Gammaproteobacteria</taxon>
        <taxon>Moraxellales</taxon>
        <taxon>Moraxellaceae</taxon>
        <taxon>Acinetobacter</taxon>
    </lineage>
</organism>
<keyword id="KW-0548">Nucleotidyltransferase</keyword>
<keyword id="KW-0694">RNA-binding</keyword>
<keyword id="KW-0698">rRNA processing</keyword>
<keyword id="KW-0808">Transferase</keyword>
<keyword id="KW-0819">tRNA processing</keyword>
<keyword id="KW-0820">tRNA-binding</keyword>
<name>RNPH_ACIAD</name>
<protein>
    <recommendedName>
        <fullName evidence="1">Ribonuclease PH</fullName>
        <shortName evidence="1">RNase PH</shortName>
        <ecNumber evidence="1">2.7.7.56</ecNumber>
    </recommendedName>
    <alternativeName>
        <fullName evidence="1">tRNA nucleotidyltransferase</fullName>
    </alternativeName>
</protein>
<reference key="1">
    <citation type="journal article" date="2004" name="Nucleic Acids Res.">
        <title>Unique features revealed by the genome sequence of Acinetobacter sp. ADP1, a versatile and naturally transformation competent bacterium.</title>
        <authorList>
            <person name="Barbe V."/>
            <person name="Vallenet D."/>
            <person name="Fonknechten N."/>
            <person name="Kreimeyer A."/>
            <person name="Oztas S."/>
            <person name="Labarre L."/>
            <person name="Cruveiller S."/>
            <person name="Robert C."/>
            <person name="Duprat S."/>
            <person name="Wincker P."/>
            <person name="Ornston L.N."/>
            <person name="Weissenbach J."/>
            <person name="Marliere P."/>
            <person name="Cohen G.N."/>
            <person name="Medigue C."/>
        </authorList>
    </citation>
    <scope>NUCLEOTIDE SEQUENCE [LARGE SCALE GENOMIC DNA]</scope>
    <source>
        <strain>ATCC 33305 / BD413 / ADP1</strain>
    </source>
</reference>
<dbReference type="EC" id="2.7.7.56" evidence="1"/>
<dbReference type="EMBL" id="CR543861">
    <property type="protein sequence ID" value="CAG67032.1"/>
    <property type="status" value="ALT_INIT"/>
    <property type="molecule type" value="Genomic_DNA"/>
</dbReference>
<dbReference type="RefSeq" id="WP_004930887.1">
    <property type="nucleotide sequence ID" value="NC_005966.1"/>
</dbReference>
<dbReference type="SMR" id="Q6FFX5"/>
<dbReference type="STRING" id="202950.GCA_001485005_01797"/>
<dbReference type="GeneID" id="45232583"/>
<dbReference type="KEGG" id="aci:ACIAD0050"/>
<dbReference type="eggNOG" id="COG0689">
    <property type="taxonomic scope" value="Bacteria"/>
</dbReference>
<dbReference type="HOGENOM" id="CLU_050858_0_0_6"/>
<dbReference type="OrthoDB" id="9802265at2"/>
<dbReference type="BioCyc" id="ASP62977:ACIAD_RS00255-MONOMER"/>
<dbReference type="Proteomes" id="UP000000430">
    <property type="component" value="Chromosome"/>
</dbReference>
<dbReference type="GO" id="GO:0000175">
    <property type="term" value="F:3'-5'-RNA exonuclease activity"/>
    <property type="evidence" value="ECO:0007669"/>
    <property type="project" value="UniProtKB-UniRule"/>
</dbReference>
<dbReference type="GO" id="GO:0000049">
    <property type="term" value="F:tRNA binding"/>
    <property type="evidence" value="ECO:0007669"/>
    <property type="project" value="UniProtKB-UniRule"/>
</dbReference>
<dbReference type="GO" id="GO:0009022">
    <property type="term" value="F:tRNA nucleotidyltransferase activity"/>
    <property type="evidence" value="ECO:0007669"/>
    <property type="project" value="UniProtKB-UniRule"/>
</dbReference>
<dbReference type="GO" id="GO:0016075">
    <property type="term" value="P:rRNA catabolic process"/>
    <property type="evidence" value="ECO:0007669"/>
    <property type="project" value="UniProtKB-UniRule"/>
</dbReference>
<dbReference type="GO" id="GO:0006364">
    <property type="term" value="P:rRNA processing"/>
    <property type="evidence" value="ECO:0007669"/>
    <property type="project" value="UniProtKB-KW"/>
</dbReference>
<dbReference type="GO" id="GO:0008033">
    <property type="term" value="P:tRNA processing"/>
    <property type="evidence" value="ECO:0007669"/>
    <property type="project" value="UniProtKB-UniRule"/>
</dbReference>
<dbReference type="CDD" id="cd11362">
    <property type="entry name" value="RNase_PH_bact"/>
    <property type="match status" value="1"/>
</dbReference>
<dbReference type="FunFam" id="3.30.230.70:FF:000003">
    <property type="entry name" value="Ribonuclease PH"/>
    <property type="match status" value="1"/>
</dbReference>
<dbReference type="Gene3D" id="3.30.230.70">
    <property type="entry name" value="GHMP Kinase, N-terminal domain"/>
    <property type="match status" value="1"/>
</dbReference>
<dbReference type="HAMAP" id="MF_00564">
    <property type="entry name" value="RNase_PH"/>
    <property type="match status" value="1"/>
</dbReference>
<dbReference type="InterPro" id="IPR001247">
    <property type="entry name" value="ExoRNase_PH_dom1"/>
</dbReference>
<dbReference type="InterPro" id="IPR015847">
    <property type="entry name" value="ExoRNase_PH_dom2"/>
</dbReference>
<dbReference type="InterPro" id="IPR036345">
    <property type="entry name" value="ExoRNase_PH_dom2_sf"/>
</dbReference>
<dbReference type="InterPro" id="IPR027408">
    <property type="entry name" value="PNPase/RNase_PH_dom_sf"/>
</dbReference>
<dbReference type="InterPro" id="IPR020568">
    <property type="entry name" value="Ribosomal_Su5_D2-typ_SF"/>
</dbReference>
<dbReference type="InterPro" id="IPR050080">
    <property type="entry name" value="RNase_PH"/>
</dbReference>
<dbReference type="InterPro" id="IPR002381">
    <property type="entry name" value="RNase_PH_bac-type"/>
</dbReference>
<dbReference type="InterPro" id="IPR018336">
    <property type="entry name" value="RNase_PH_CS"/>
</dbReference>
<dbReference type="NCBIfam" id="TIGR01966">
    <property type="entry name" value="RNasePH"/>
    <property type="match status" value="1"/>
</dbReference>
<dbReference type="PANTHER" id="PTHR11953">
    <property type="entry name" value="EXOSOME COMPLEX COMPONENT"/>
    <property type="match status" value="1"/>
</dbReference>
<dbReference type="PANTHER" id="PTHR11953:SF0">
    <property type="entry name" value="EXOSOME COMPLEX COMPONENT RRP41"/>
    <property type="match status" value="1"/>
</dbReference>
<dbReference type="Pfam" id="PF01138">
    <property type="entry name" value="RNase_PH"/>
    <property type="match status" value="1"/>
</dbReference>
<dbReference type="Pfam" id="PF03725">
    <property type="entry name" value="RNase_PH_C"/>
    <property type="match status" value="1"/>
</dbReference>
<dbReference type="SUPFAM" id="SSF55666">
    <property type="entry name" value="Ribonuclease PH domain 2-like"/>
    <property type="match status" value="1"/>
</dbReference>
<dbReference type="SUPFAM" id="SSF54211">
    <property type="entry name" value="Ribosomal protein S5 domain 2-like"/>
    <property type="match status" value="1"/>
</dbReference>
<dbReference type="PROSITE" id="PS01277">
    <property type="entry name" value="RIBONUCLEASE_PH"/>
    <property type="match status" value="1"/>
</dbReference>
<sequence length="238" mass="26370">MRLDQRALDQLRDVKITRNYTRYAEGSVLVEFGHTKVLCTASIDNSVPRFLKGQGQGWVTAEYGMLPRSTHTRSDREAARGKQTGRTQEIQRLIGRSLRAMVDLKKLGENTITIDCDVIQADGGTRTAAITGAAVALIDAMNVLLEKKKIKQDPLKGLVAAISVGIYQDEVLLDLCYEEDSNCQTDLNVVMTQAGEFIEIQGTAEEKPFTRTQANAMLEVAEKGIQELIKKQQQALGW</sequence>
<comment type="function">
    <text evidence="1">Phosphorolytic 3'-5' exoribonuclease that plays an important role in tRNA 3'-end maturation. Removes nucleotide residues following the 3'-CCA terminus of tRNAs; can also add nucleotides to the ends of RNA molecules by using nucleoside diphosphates as substrates, but this may not be physiologically important. Probably plays a role in initiation of 16S rRNA degradation (leading to ribosome degradation) during starvation.</text>
</comment>
<comment type="catalytic activity">
    <reaction evidence="1">
        <text>tRNA(n+1) + phosphate = tRNA(n) + a ribonucleoside 5'-diphosphate</text>
        <dbReference type="Rhea" id="RHEA:10628"/>
        <dbReference type="Rhea" id="RHEA-COMP:17343"/>
        <dbReference type="Rhea" id="RHEA-COMP:17344"/>
        <dbReference type="ChEBI" id="CHEBI:43474"/>
        <dbReference type="ChEBI" id="CHEBI:57930"/>
        <dbReference type="ChEBI" id="CHEBI:173114"/>
        <dbReference type="EC" id="2.7.7.56"/>
    </reaction>
</comment>
<comment type="subunit">
    <text evidence="1">Homohexameric ring arranged as a trimer of dimers.</text>
</comment>
<comment type="similarity">
    <text evidence="1">Belongs to the RNase PH family.</text>
</comment>
<comment type="sequence caution" evidence="2">
    <conflict type="erroneous initiation">
        <sequence resource="EMBL-CDS" id="CAG67032"/>
    </conflict>
    <text>Extended N-terminus.</text>
</comment>
<proteinExistence type="inferred from homology"/>